<reference key="1">
    <citation type="journal article" date="1995" name="Science">
        <title>The minimal gene complement of Mycoplasma genitalium.</title>
        <authorList>
            <person name="Fraser C.M."/>
            <person name="Gocayne J.D."/>
            <person name="White O."/>
            <person name="Adams M.D."/>
            <person name="Clayton R.A."/>
            <person name="Fleischmann R.D."/>
            <person name="Bult C.J."/>
            <person name="Kerlavage A.R."/>
            <person name="Sutton G.G."/>
            <person name="Kelley J.M."/>
            <person name="Fritchman J.L."/>
            <person name="Weidman J.F."/>
            <person name="Small K.V."/>
            <person name="Sandusky M."/>
            <person name="Fuhrmann J.L."/>
            <person name="Nguyen D.T."/>
            <person name="Utterback T.R."/>
            <person name="Saudek D.M."/>
            <person name="Phillips C.A."/>
            <person name="Merrick J.M."/>
            <person name="Tomb J.-F."/>
            <person name="Dougherty B.A."/>
            <person name="Bott K.F."/>
            <person name="Hu P.-C."/>
            <person name="Lucier T.S."/>
            <person name="Peterson S.N."/>
            <person name="Smith H.O."/>
            <person name="Hutchison C.A. III"/>
            <person name="Venter J.C."/>
        </authorList>
    </citation>
    <scope>NUCLEOTIDE SEQUENCE [LARGE SCALE GENOMIC DNA]</scope>
    <source>
        <strain>ATCC 33530 / DSM 19775 / NCTC 10195 / G37</strain>
    </source>
</reference>
<reference key="2">
    <citation type="journal article" date="1993" name="J. Bacteriol.">
        <title>A survey of the Mycoplasma genitalium genome by using random sequencing.</title>
        <authorList>
            <person name="Peterson S.N."/>
            <person name="Hu P.-C."/>
            <person name="Bott K.F."/>
            <person name="Hutchison C.A. III"/>
        </authorList>
    </citation>
    <scope>NUCLEOTIDE SEQUENCE [GENOMIC DNA] OF 1-85</scope>
    <source>
        <strain>ATCC 33530 / DSM 19775 / NCTC 10195 / G37</strain>
    </source>
</reference>
<reference key="3">
    <citation type="journal article" date="1991" name="Nucleic Acids Res.">
        <title>A random sequencing approach for placing markers on the physical map of Mycoplasma genitalium.</title>
        <authorList>
            <person name="Peterson S.N."/>
            <person name="Schramm N."/>
            <person name="Hu P.-C."/>
            <person name="Bott K.F."/>
            <person name="Hutchison C.A. III"/>
        </authorList>
    </citation>
    <scope>NUCLEOTIDE SEQUENCE [GENOMIC DNA] OF 569-668</scope>
    <source>
        <strain>ATCC 33530 / DSM 19775 / NCTC 10195 / G37</strain>
    </source>
</reference>
<name>UVRA_MYCGE</name>
<proteinExistence type="inferred from homology"/>
<accession>P47660</accession>
<accession>Q49295</accession>
<organism>
    <name type="scientific">Mycoplasma genitalium (strain ATCC 33530 / DSM 19775 / NCTC 10195 / G37)</name>
    <name type="common">Mycoplasmoides genitalium</name>
    <dbReference type="NCBI Taxonomy" id="243273"/>
    <lineage>
        <taxon>Bacteria</taxon>
        <taxon>Bacillati</taxon>
        <taxon>Mycoplasmatota</taxon>
        <taxon>Mycoplasmoidales</taxon>
        <taxon>Mycoplasmoidaceae</taxon>
        <taxon>Mycoplasmoides</taxon>
    </lineage>
</organism>
<sequence length="952" mass="106334">MKPEWKNNDFIRVKGARENNLKNINIDIPKNQFVVITGLSGSGKSSLAFNTIYAEGRRRYLESLSSYARQFLGNSDKPDVDLIEGLSPAISIDQKTTSHNPRSTMGTVTEIYDYLRLLWARIGTPYCPNGHGSIQTQTINQIANQIFDLPNKSKVQLLAPTVKNQRGIFTNEFIKYKQLGFLRVLVDGQIYTLDDEIKLDKNTKHNISVVIDRIIINKDNQTYSRIVDSIETIDRLTNGKIEVLKEDGTILNFSKNHGCDKCGFSISELEPRLFSFNSPLGSCSYCKGLGFSYEPDVDKIIADSKLSINQGAIDIFKNIVHGTSLDWQRFLSLVNHYKIPLDKPIEQLDKSQLNLILEGSDEPIEIKTISNSGAKNIRFEHYEGIANLIKRRHLETNSQVSREWYSAYMSEITCKKCHGKKLIKDALSVKLGGIDIISFTELSIDKSIDFLLKLELNDEQKKIGELALKEIINRLSFLKNVGLDYLNLARRASTLSGGEAQRIRLATQIGSQLTGVLYVMDEPSIGLHQKDNMRLIKTMMVMRDLGNTLLVVEHDSETMLAADYLIDIGPKAGNEGGELVACGTPLQVMENSNSITGQYLSGKKQISIPKNRHSGNGKTIIIKGAKVNNLKNINVTIPLNKLVLITGVSGSGKSSLINQTLVPALERILYRKGVKKDTYKEIIGANNIDKIIVVSQDPIGRTPRSNPATYISVFDDIRDLFANTKEAKARGYTNSRFSFNVPGGRCDKCFGDGVIRIEMHFLPDVYVKCEVCNGKKYNSQTLEIKYLGKSIFDVLQMSCKEAYEFFKAIPNISRKLRLLCDVGLEYLQLGINVTFLSGGEAQRIKLSKFLQKKSTGKTLFVLDEPSTGLHLEDINKLLTIIQRIIKNGDTVVVIEHNLDIIKVADYIIDLGPEGGDNGGQIVAQGTPEQLINQVNKSYTAQYLSKILKPDSI</sequence>
<gene>
    <name evidence="1" type="primary">uvrA</name>
    <name type="ordered locus">MG421</name>
</gene>
<evidence type="ECO:0000255" key="1">
    <source>
        <dbReference type="HAMAP-Rule" id="MF_00205"/>
    </source>
</evidence>
<evidence type="ECO:0000305" key="2"/>
<protein>
    <recommendedName>
        <fullName evidence="1">UvrABC system protein A</fullName>
        <shortName evidence="1">UvrA protein</shortName>
    </recommendedName>
    <alternativeName>
        <fullName evidence="1">Excinuclease ABC subunit A</fullName>
    </alternativeName>
</protein>
<feature type="chain" id="PRO_0000093064" description="UvrABC system protein A">
    <location>
        <begin position="1"/>
        <end position="952"/>
    </location>
</feature>
<feature type="domain" description="ABC transporter 1" evidence="1">
    <location>
        <begin position="316"/>
        <end position="595"/>
    </location>
</feature>
<feature type="domain" description="ABC transporter 2" evidence="1">
    <location>
        <begin position="615"/>
        <end position="944"/>
    </location>
</feature>
<feature type="zinc finger region" description="C4-type" evidence="1">
    <location>
        <begin position="259"/>
        <end position="286"/>
    </location>
</feature>
<feature type="zinc finger region" description="C4-type" evidence="1">
    <location>
        <begin position="746"/>
        <end position="772"/>
    </location>
</feature>
<feature type="binding site" evidence="1">
    <location>
        <begin position="38"/>
        <end position="45"/>
    </location>
    <ligand>
        <name>ATP</name>
        <dbReference type="ChEBI" id="CHEBI:30616"/>
    </ligand>
</feature>
<feature type="binding site" evidence="1">
    <location>
        <begin position="647"/>
        <end position="654"/>
    </location>
    <ligand>
        <name>ATP</name>
        <dbReference type="ChEBI" id="CHEBI:30616"/>
    </ligand>
</feature>
<dbReference type="EMBL" id="L43967">
    <property type="protein sequence ID" value="AAC71645.1"/>
    <property type="status" value="ALT_INIT"/>
    <property type="molecule type" value="Genomic_DNA"/>
</dbReference>
<dbReference type="EMBL" id="U02172">
    <property type="protein sequence ID" value="AAD12454.1"/>
    <property type="status" value="ALT_INIT"/>
    <property type="molecule type" value="Genomic_DNA"/>
</dbReference>
<dbReference type="EMBL" id="X61514">
    <property type="protein sequence ID" value="CAA43728.1"/>
    <property type="molecule type" value="Genomic_DNA"/>
</dbReference>
<dbReference type="PIR" id="T09750">
    <property type="entry name" value="T09750"/>
</dbReference>
<dbReference type="SMR" id="P47660"/>
<dbReference type="FunCoup" id="P47660">
    <property type="interactions" value="115"/>
</dbReference>
<dbReference type="STRING" id="243273.MG_421"/>
<dbReference type="KEGG" id="mge:MG_421"/>
<dbReference type="eggNOG" id="COG0178">
    <property type="taxonomic scope" value="Bacteria"/>
</dbReference>
<dbReference type="HOGENOM" id="CLU_001370_0_2_14"/>
<dbReference type="InParanoid" id="P47660"/>
<dbReference type="Proteomes" id="UP000000807">
    <property type="component" value="Chromosome"/>
</dbReference>
<dbReference type="GO" id="GO:0005737">
    <property type="term" value="C:cytoplasm"/>
    <property type="evidence" value="ECO:0007669"/>
    <property type="project" value="UniProtKB-SubCell"/>
</dbReference>
<dbReference type="GO" id="GO:0009380">
    <property type="term" value="C:excinuclease repair complex"/>
    <property type="evidence" value="ECO:0007669"/>
    <property type="project" value="InterPro"/>
</dbReference>
<dbReference type="GO" id="GO:0005524">
    <property type="term" value="F:ATP binding"/>
    <property type="evidence" value="ECO:0007669"/>
    <property type="project" value="UniProtKB-UniRule"/>
</dbReference>
<dbReference type="GO" id="GO:0016887">
    <property type="term" value="F:ATP hydrolysis activity"/>
    <property type="evidence" value="ECO:0007669"/>
    <property type="project" value="InterPro"/>
</dbReference>
<dbReference type="GO" id="GO:0003677">
    <property type="term" value="F:DNA binding"/>
    <property type="evidence" value="ECO:0007669"/>
    <property type="project" value="UniProtKB-UniRule"/>
</dbReference>
<dbReference type="GO" id="GO:0009381">
    <property type="term" value="F:excinuclease ABC activity"/>
    <property type="evidence" value="ECO:0007669"/>
    <property type="project" value="UniProtKB-UniRule"/>
</dbReference>
<dbReference type="GO" id="GO:0008270">
    <property type="term" value="F:zinc ion binding"/>
    <property type="evidence" value="ECO:0007669"/>
    <property type="project" value="UniProtKB-UniRule"/>
</dbReference>
<dbReference type="GO" id="GO:0006289">
    <property type="term" value="P:nucleotide-excision repair"/>
    <property type="evidence" value="ECO:0007669"/>
    <property type="project" value="UniProtKB-UniRule"/>
</dbReference>
<dbReference type="GO" id="GO:0009432">
    <property type="term" value="P:SOS response"/>
    <property type="evidence" value="ECO:0007669"/>
    <property type="project" value="UniProtKB-UniRule"/>
</dbReference>
<dbReference type="CDD" id="cd03270">
    <property type="entry name" value="ABC_UvrA_I"/>
    <property type="match status" value="1"/>
</dbReference>
<dbReference type="CDD" id="cd03271">
    <property type="entry name" value="ABC_UvrA_II"/>
    <property type="match status" value="1"/>
</dbReference>
<dbReference type="Gene3D" id="1.10.8.280">
    <property type="entry name" value="ABC transporter ATPase domain-like"/>
    <property type="match status" value="1"/>
</dbReference>
<dbReference type="Gene3D" id="1.20.1580.10">
    <property type="entry name" value="ABC transporter ATPase like domain"/>
    <property type="match status" value="2"/>
</dbReference>
<dbReference type="Gene3D" id="3.30.1490.20">
    <property type="entry name" value="ATP-grasp fold, A domain"/>
    <property type="match status" value="1"/>
</dbReference>
<dbReference type="Gene3D" id="3.40.50.300">
    <property type="entry name" value="P-loop containing nucleotide triphosphate hydrolases"/>
    <property type="match status" value="2"/>
</dbReference>
<dbReference type="HAMAP" id="MF_00205">
    <property type="entry name" value="UvrA"/>
    <property type="match status" value="1"/>
</dbReference>
<dbReference type="InterPro" id="IPR003439">
    <property type="entry name" value="ABC_transporter-like_ATP-bd"/>
</dbReference>
<dbReference type="InterPro" id="IPR017871">
    <property type="entry name" value="ABC_transporter-like_CS"/>
</dbReference>
<dbReference type="InterPro" id="IPR013815">
    <property type="entry name" value="ATP_grasp_subdomain_1"/>
</dbReference>
<dbReference type="InterPro" id="IPR027417">
    <property type="entry name" value="P-loop_NTPase"/>
</dbReference>
<dbReference type="InterPro" id="IPR004602">
    <property type="entry name" value="UvrA"/>
</dbReference>
<dbReference type="InterPro" id="IPR041552">
    <property type="entry name" value="UvrA_DNA-bd"/>
</dbReference>
<dbReference type="InterPro" id="IPR041102">
    <property type="entry name" value="UvrA_inter"/>
</dbReference>
<dbReference type="NCBIfam" id="NF001503">
    <property type="entry name" value="PRK00349.1"/>
    <property type="match status" value="1"/>
</dbReference>
<dbReference type="NCBIfam" id="TIGR00630">
    <property type="entry name" value="uvra"/>
    <property type="match status" value="1"/>
</dbReference>
<dbReference type="PANTHER" id="PTHR43152">
    <property type="entry name" value="UVRABC SYSTEM PROTEIN A"/>
    <property type="match status" value="1"/>
</dbReference>
<dbReference type="PANTHER" id="PTHR43152:SF3">
    <property type="entry name" value="UVRABC SYSTEM PROTEIN A"/>
    <property type="match status" value="1"/>
</dbReference>
<dbReference type="Pfam" id="PF17755">
    <property type="entry name" value="UvrA_DNA-bind"/>
    <property type="match status" value="1"/>
</dbReference>
<dbReference type="Pfam" id="PF17760">
    <property type="entry name" value="UvrA_inter"/>
    <property type="match status" value="1"/>
</dbReference>
<dbReference type="SUPFAM" id="SSF52540">
    <property type="entry name" value="P-loop containing nucleoside triphosphate hydrolases"/>
    <property type="match status" value="2"/>
</dbReference>
<dbReference type="PROSITE" id="PS00211">
    <property type="entry name" value="ABC_TRANSPORTER_1"/>
    <property type="match status" value="2"/>
</dbReference>
<dbReference type="PROSITE" id="PS50893">
    <property type="entry name" value="ABC_TRANSPORTER_2"/>
    <property type="match status" value="1"/>
</dbReference>
<comment type="function">
    <text evidence="1">The UvrABC repair system catalyzes the recognition and processing of DNA lesions. UvrA is an ATPase and a DNA-binding protein. A damage recognition complex composed of 2 UvrA and 2 UvrB subunits scans DNA for abnormalities. When the presence of a lesion has been verified by UvrB, the UvrA molecules dissociate.</text>
</comment>
<comment type="subunit">
    <text evidence="1">Forms a heterotetramer with UvrB during the search for lesions.</text>
</comment>
<comment type="subcellular location">
    <subcellularLocation>
        <location evidence="1">Cytoplasm</location>
    </subcellularLocation>
</comment>
<comment type="similarity">
    <text evidence="1">Belongs to the ABC transporter superfamily. UvrA family.</text>
</comment>
<comment type="sequence caution" evidence="2">
    <conflict type="erroneous initiation">
        <sequence resource="EMBL-CDS" id="AAC71645"/>
    </conflict>
</comment>
<comment type="sequence caution" evidence="2">
    <conflict type="erroneous initiation">
        <sequence resource="EMBL-CDS" id="AAD12454"/>
    </conflict>
</comment>
<keyword id="KW-0067">ATP-binding</keyword>
<keyword id="KW-0963">Cytoplasm</keyword>
<keyword id="KW-0227">DNA damage</keyword>
<keyword id="KW-0228">DNA excision</keyword>
<keyword id="KW-0234">DNA repair</keyword>
<keyword id="KW-0238">DNA-binding</keyword>
<keyword id="KW-0267">Excision nuclease</keyword>
<keyword id="KW-0479">Metal-binding</keyword>
<keyword id="KW-0547">Nucleotide-binding</keyword>
<keyword id="KW-1185">Reference proteome</keyword>
<keyword id="KW-0677">Repeat</keyword>
<keyword id="KW-0742">SOS response</keyword>
<keyword id="KW-0862">Zinc</keyword>
<keyword id="KW-0863">Zinc-finger</keyword>